<keyword id="KW-0997">Cell inner membrane</keyword>
<keyword id="KW-1003">Cell membrane</keyword>
<keyword id="KW-0406">Ion transport</keyword>
<keyword id="KW-0472">Membrane</keyword>
<keyword id="KW-0769">Symport</keyword>
<keyword id="KW-0812">Transmembrane</keyword>
<keyword id="KW-1133">Transmembrane helix</keyword>
<keyword id="KW-0813">Transport</keyword>
<name>MNTH_KLEP3</name>
<reference key="1">
    <citation type="journal article" date="2008" name="PLoS Genet.">
        <title>Complete genome sequence of the N2-fixing broad host range endophyte Klebsiella pneumoniae 342 and virulence predictions verified in mice.</title>
        <authorList>
            <person name="Fouts D.E."/>
            <person name="Tyler H.L."/>
            <person name="DeBoy R.T."/>
            <person name="Daugherty S."/>
            <person name="Ren Q."/>
            <person name="Badger J.H."/>
            <person name="Durkin A.S."/>
            <person name="Huot H."/>
            <person name="Shrivastava S."/>
            <person name="Kothari S."/>
            <person name="Dodson R.J."/>
            <person name="Mohamoud Y."/>
            <person name="Khouri H."/>
            <person name="Roesch L.F.W."/>
            <person name="Krogfelt K.A."/>
            <person name="Struve C."/>
            <person name="Triplett E.W."/>
            <person name="Methe B.A."/>
        </authorList>
    </citation>
    <scope>NUCLEOTIDE SEQUENCE [LARGE SCALE GENOMIC DNA]</scope>
    <source>
        <strain>342</strain>
    </source>
</reference>
<gene>
    <name evidence="1" type="primary">mntH</name>
    <name type="ordered locus">KPK_1396</name>
</gene>
<organism>
    <name type="scientific">Klebsiella pneumoniae (strain 342)</name>
    <dbReference type="NCBI Taxonomy" id="507522"/>
    <lineage>
        <taxon>Bacteria</taxon>
        <taxon>Pseudomonadati</taxon>
        <taxon>Pseudomonadota</taxon>
        <taxon>Gammaproteobacteria</taxon>
        <taxon>Enterobacterales</taxon>
        <taxon>Enterobacteriaceae</taxon>
        <taxon>Klebsiella/Raoultella group</taxon>
        <taxon>Klebsiella</taxon>
        <taxon>Klebsiella pneumoniae complex</taxon>
    </lineage>
</organism>
<accession>B5XVU3</accession>
<dbReference type="EMBL" id="CP000964">
    <property type="protein sequence ID" value="ACI11813.1"/>
    <property type="molecule type" value="Genomic_DNA"/>
</dbReference>
<dbReference type="SMR" id="B5XVU3"/>
<dbReference type="KEGG" id="kpe:KPK_1396"/>
<dbReference type="HOGENOM" id="CLU_020088_2_0_6"/>
<dbReference type="Proteomes" id="UP000001734">
    <property type="component" value="Chromosome"/>
</dbReference>
<dbReference type="GO" id="GO:0005886">
    <property type="term" value="C:plasma membrane"/>
    <property type="evidence" value="ECO:0007669"/>
    <property type="project" value="UniProtKB-SubCell"/>
</dbReference>
<dbReference type="GO" id="GO:0015086">
    <property type="term" value="F:cadmium ion transmembrane transporter activity"/>
    <property type="evidence" value="ECO:0007669"/>
    <property type="project" value="TreeGrafter"/>
</dbReference>
<dbReference type="GO" id="GO:0005384">
    <property type="term" value="F:manganese ion transmembrane transporter activity"/>
    <property type="evidence" value="ECO:0007669"/>
    <property type="project" value="TreeGrafter"/>
</dbReference>
<dbReference type="GO" id="GO:0046872">
    <property type="term" value="F:metal ion binding"/>
    <property type="evidence" value="ECO:0007669"/>
    <property type="project" value="UniProtKB-UniRule"/>
</dbReference>
<dbReference type="GO" id="GO:0015293">
    <property type="term" value="F:symporter activity"/>
    <property type="evidence" value="ECO:0007669"/>
    <property type="project" value="UniProtKB-UniRule"/>
</dbReference>
<dbReference type="GO" id="GO:0034755">
    <property type="term" value="P:iron ion transmembrane transport"/>
    <property type="evidence" value="ECO:0007669"/>
    <property type="project" value="TreeGrafter"/>
</dbReference>
<dbReference type="HAMAP" id="MF_00221">
    <property type="entry name" value="NRAMP"/>
    <property type="match status" value="1"/>
</dbReference>
<dbReference type="InterPro" id="IPR001046">
    <property type="entry name" value="NRAMP_fam"/>
</dbReference>
<dbReference type="NCBIfam" id="TIGR01197">
    <property type="entry name" value="nramp"/>
    <property type="match status" value="1"/>
</dbReference>
<dbReference type="NCBIfam" id="NF037982">
    <property type="entry name" value="Nramp_1"/>
    <property type="match status" value="1"/>
</dbReference>
<dbReference type="NCBIfam" id="NF001923">
    <property type="entry name" value="PRK00701.1"/>
    <property type="match status" value="1"/>
</dbReference>
<dbReference type="PANTHER" id="PTHR11706:SF33">
    <property type="entry name" value="NATURAL RESISTANCE-ASSOCIATED MACROPHAGE PROTEIN 2"/>
    <property type="match status" value="1"/>
</dbReference>
<dbReference type="PANTHER" id="PTHR11706">
    <property type="entry name" value="SOLUTE CARRIER PROTEIN FAMILY 11 MEMBER"/>
    <property type="match status" value="1"/>
</dbReference>
<dbReference type="Pfam" id="PF01566">
    <property type="entry name" value="Nramp"/>
    <property type="match status" value="1"/>
</dbReference>
<dbReference type="PRINTS" id="PR00447">
    <property type="entry name" value="NATRESASSCMP"/>
</dbReference>
<protein>
    <recommendedName>
        <fullName evidence="1">Divalent metal cation transporter MntH</fullName>
    </recommendedName>
</protein>
<feature type="chain" id="PRO_1000100086" description="Divalent metal cation transporter MntH">
    <location>
        <begin position="1"/>
        <end position="413"/>
    </location>
</feature>
<feature type="transmembrane region" description="Helical" evidence="1">
    <location>
        <begin position="19"/>
        <end position="39"/>
    </location>
</feature>
<feature type="transmembrane region" description="Helical" evidence="1">
    <location>
        <begin position="46"/>
        <end position="66"/>
    </location>
</feature>
<feature type="transmembrane region" description="Helical" evidence="1">
    <location>
        <begin position="94"/>
        <end position="114"/>
    </location>
</feature>
<feature type="transmembrane region" description="Helical" evidence="1">
    <location>
        <begin position="122"/>
        <end position="142"/>
    </location>
</feature>
<feature type="transmembrane region" description="Helical" evidence="1">
    <location>
        <begin position="156"/>
        <end position="176"/>
    </location>
</feature>
<feature type="transmembrane region" description="Helical" evidence="1">
    <location>
        <begin position="196"/>
        <end position="216"/>
    </location>
</feature>
<feature type="transmembrane region" description="Helical" evidence="1">
    <location>
        <begin position="241"/>
        <end position="261"/>
    </location>
</feature>
<feature type="transmembrane region" description="Helical" evidence="1">
    <location>
        <begin position="290"/>
        <end position="310"/>
    </location>
</feature>
<feature type="transmembrane region" description="Helical" evidence="1">
    <location>
        <begin position="329"/>
        <end position="349"/>
    </location>
</feature>
<feature type="transmembrane region" description="Helical" evidence="1">
    <location>
        <begin position="350"/>
        <end position="370"/>
    </location>
</feature>
<feature type="transmembrane region" description="Helical" evidence="1">
    <location>
        <begin position="392"/>
        <end position="412"/>
    </location>
</feature>
<proteinExistence type="inferred from homology"/>
<sequence>MTSSRVENSSSRAARKVKLALMGPAFVAAIGYIDPGNFATNIQAGASFGYQLLWVVVWANLMAMLIQVLSAKLGIATGKNLAEQIRDHYPRPVVWFYWVQAEIIAMATDLAEFIGAAIGFKLVLGVSLLQGAVLTGVATFLILMLQRRGQKPLEKVIGGLLLFVAVAYVVELIFSQPALAPLTKGLVIPTLPNGEAVFLAAGVLGATIMPHVIYLHSSLTQHLHGGTRKERYNATRWDVAIAMTIAGFVNLAMMATAAAAFHFNGHTGVADLDQAYRTLEPLLSHAAATIFGLSLVAAGLSSTVVGTLAGQVVMQGFIRFHIPLWFRRAVTMLPSFVVILLGLDPTRILVMSQVLLSFGIALALVPLLIFTSNAQLMGDLVNTRWVRVTGWVIVAIVVSLNGWLIVGSLLGVA</sequence>
<comment type="function">
    <text evidence="1">H(+)-stimulated, divalent metal cation uptake system.</text>
</comment>
<comment type="subcellular location">
    <subcellularLocation>
        <location evidence="1">Cell inner membrane</location>
        <topology evidence="1">Multi-pass membrane protein</topology>
    </subcellularLocation>
</comment>
<comment type="similarity">
    <text evidence="1">Belongs to the NRAMP family.</text>
</comment>
<evidence type="ECO:0000255" key="1">
    <source>
        <dbReference type="HAMAP-Rule" id="MF_00221"/>
    </source>
</evidence>